<evidence type="ECO:0000255" key="1">
    <source>
        <dbReference type="HAMAP-Rule" id="MF_00600"/>
    </source>
</evidence>
<evidence type="ECO:0000305" key="2"/>
<name>CH60_HELPY</name>
<accession>P42383</accession>
<protein>
    <recommendedName>
        <fullName evidence="1">Chaperonin GroEL</fullName>
        <ecNumber evidence="1">5.6.1.7</ecNumber>
    </recommendedName>
    <alternativeName>
        <fullName evidence="1">60 kDa chaperonin</fullName>
    </alternativeName>
    <alternativeName>
        <fullName evidence="1">Chaperonin-60</fullName>
        <shortName evidence="1">Cpn60</shortName>
    </alternativeName>
</protein>
<organism>
    <name type="scientific">Helicobacter pylori (strain ATCC 700392 / 26695)</name>
    <name type="common">Campylobacter pylori</name>
    <dbReference type="NCBI Taxonomy" id="85962"/>
    <lineage>
        <taxon>Bacteria</taxon>
        <taxon>Pseudomonadati</taxon>
        <taxon>Campylobacterota</taxon>
        <taxon>Epsilonproteobacteria</taxon>
        <taxon>Campylobacterales</taxon>
        <taxon>Helicobacteraceae</taxon>
        <taxon>Helicobacter</taxon>
    </lineage>
</organism>
<gene>
    <name evidence="1" type="primary">groEL</name>
    <name evidence="1" type="synonym">groL</name>
    <name type="synonym">hsp60</name>
    <name type="synonym">hspB</name>
    <name type="synonym">mopA</name>
    <name type="ordered locus">HP_0010</name>
</gene>
<dbReference type="EC" id="5.6.1.7" evidence="1"/>
<dbReference type="EMBL" id="X73840">
    <property type="protein sequence ID" value="CAA52062.1"/>
    <property type="molecule type" value="Genomic_DNA"/>
</dbReference>
<dbReference type="EMBL" id="L23798">
    <property type="protein sequence ID" value="AAC41441.1"/>
    <property type="molecule type" value="Genomic_DNA"/>
</dbReference>
<dbReference type="EMBL" id="AE000511">
    <property type="protein sequence ID" value="AAD07080.1"/>
    <property type="molecule type" value="Genomic_DNA"/>
</dbReference>
<dbReference type="PIR" id="B64521">
    <property type="entry name" value="S36237"/>
</dbReference>
<dbReference type="RefSeq" id="NP_206812.1">
    <property type="nucleotide sequence ID" value="NC_000915.1"/>
</dbReference>
<dbReference type="RefSeq" id="WP_001040293.1">
    <property type="nucleotide sequence ID" value="NC_018939.1"/>
</dbReference>
<dbReference type="SMR" id="P42383"/>
<dbReference type="DIP" id="DIP-3069N"/>
<dbReference type="FunCoup" id="P42383">
    <property type="interactions" value="460"/>
</dbReference>
<dbReference type="IntAct" id="P42383">
    <property type="interactions" value="12"/>
</dbReference>
<dbReference type="MINT" id="P42383"/>
<dbReference type="STRING" id="85962.HP_0010"/>
<dbReference type="PaxDb" id="85962-C694_00045"/>
<dbReference type="EnsemblBacteria" id="AAD07080">
    <property type="protein sequence ID" value="AAD07080"/>
    <property type="gene ID" value="HP_0010"/>
</dbReference>
<dbReference type="KEGG" id="heo:C694_00045"/>
<dbReference type="KEGG" id="hpy:HP_0010"/>
<dbReference type="PATRIC" id="fig|85962.47.peg.9"/>
<dbReference type="eggNOG" id="COG0459">
    <property type="taxonomic scope" value="Bacteria"/>
</dbReference>
<dbReference type="InParanoid" id="P42383"/>
<dbReference type="OrthoDB" id="9766614at2"/>
<dbReference type="PhylomeDB" id="P42383"/>
<dbReference type="PHI-base" id="PHI:10299"/>
<dbReference type="Proteomes" id="UP000000429">
    <property type="component" value="Chromosome"/>
</dbReference>
<dbReference type="GO" id="GO:1990220">
    <property type="term" value="C:GroEL-GroES complex"/>
    <property type="evidence" value="ECO:0000318"/>
    <property type="project" value="GO_Central"/>
</dbReference>
<dbReference type="GO" id="GO:0005524">
    <property type="term" value="F:ATP binding"/>
    <property type="evidence" value="ECO:0000318"/>
    <property type="project" value="GO_Central"/>
</dbReference>
<dbReference type="GO" id="GO:0140662">
    <property type="term" value="F:ATP-dependent protein folding chaperone"/>
    <property type="evidence" value="ECO:0007669"/>
    <property type="project" value="InterPro"/>
</dbReference>
<dbReference type="GO" id="GO:0016853">
    <property type="term" value="F:isomerase activity"/>
    <property type="evidence" value="ECO:0007669"/>
    <property type="project" value="UniProtKB-KW"/>
</dbReference>
<dbReference type="GO" id="GO:0051082">
    <property type="term" value="F:unfolded protein binding"/>
    <property type="evidence" value="ECO:0000318"/>
    <property type="project" value="GO_Central"/>
</dbReference>
<dbReference type="GO" id="GO:0051085">
    <property type="term" value="P:chaperone cofactor-dependent protein refolding"/>
    <property type="evidence" value="ECO:0000318"/>
    <property type="project" value="GO_Central"/>
</dbReference>
<dbReference type="GO" id="GO:0042026">
    <property type="term" value="P:protein refolding"/>
    <property type="evidence" value="ECO:0007669"/>
    <property type="project" value="UniProtKB-UniRule"/>
</dbReference>
<dbReference type="GO" id="GO:0009408">
    <property type="term" value="P:response to heat"/>
    <property type="evidence" value="ECO:0000318"/>
    <property type="project" value="GO_Central"/>
</dbReference>
<dbReference type="CDD" id="cd03344">
    <property type="entry name" value="GroEL"/>
    <property type="match status" value="1"/>
</dbReference>
<dbReference type="FunFam" id="3.50.7.10:FF:000001">
    <property type="entry name" value="60 kDa chaperonin"/>
    <property type="match status" value="1"/>
</dbReference>
<dbReference type="Gene3D" id="3.50.7.10">
    <property type="entry name" value="GroEL"/>
    <property type="match status" value="1"/>
</dbReference>
<dbReference type="Gene3D" id="1.10.560.10">
    <property type="entry name" value="GroEL-like equatorial domain"/>
    <property type="match status" value="1"/>
</dbReference>
<dbReference type="Gene3D" id="3.30.260.10">
    <property type="entry name" value="TCP-1-like chaperonin intermediate domain"/>
    <property type="match status" value="1"/>
</dbReference>
<dbReference type="HAMAP" id="MF_00600">
    <property type="entry name" value="CH60"/>
    <property type="match status" value="1"/>
</dbReference>
<dbReference type="InterPro" id="IPR018370">
    <property type="entry name" value="Chaperonin_Cpn60_CS"/>
</dbReference>
<dbReference type="InterPro" id="IPR001844">
    <property type="entry name" value="Cpn60/GroEL"/>
</dbReference>
<dbReference type="InterPro" id="IPR002423">
    <property type="entry name" value="Cpn60/GroEL/TCP-1"/>
</dbReference>
<dbReference type="InterPro" id="IPR027409">
    <property type="entry name" value="GroEL-like_apical_dom_sf"/>
</dbReference>
<dbReference type="InterPro" id="IPR027413">
    <property type="entry name" value="GROEL-like_equatorial_sf"/>
</dbReference>
<dbReference type="InterPro" id="IPR027410">
    <property type="entry name" value="TCP-1-like_intermed_sf"/>
</dbReference>
<dbReference type="NCBIfam" id="TIGR02348">
    <property type="entry name" value="GroEL"/>
    <property type="match status" value="1"/>
</dbReference>
<dbReference type="NCBIfam" id="NF000592">
    <property type="entry name" value="PRK00013.1"/>
    <property type="match status" value="1"/>
</dbReference>
<dbReference type="NCBIfam" id="NF009487">
    <property type="entry name" value="PRK12849.1"/>
    <property type="match status" value="1"/>
</dbReference>
<dbReference type="NCBIfam" id="NF009488">
    <property type="entry name" value="PRK12850.1"/>
    <property type="match status" value="1"/>
</dbReference>
<dbReference type="NCBIfam" id="NF009489">
    <property type="entry name" value="PRK12851.1"/>
    <property type="match status" value="1"/>
</dbReference>
<dbReference type="PANTHER" id="PTHR45633">
    <property type="entry name" value="60 KDA HEAT SHOCK PROTEIN, MITOCHONDRIAL"/>
    <property type="match status" value="1"/>
</dbReference>
<dbReference type="Pfam" id="PF00118">
    <property type="entry name" value="Cpn60_TCP1"/>
    <property type="match status" value="1"/>
</dbReference>
<dbReference type="PRINTS" id="PR00298">
    <property type="entry name" value="CHAPERONIN60"/>
</dbReference>
<dbReference type="SUPFAM" id="SSF52029">
    <property type="entry name" value="GroEL apical domain-like"/>
    <property type="match status" value="1"/>
</dbReference>
<dbReference type="SUPFAM" id="SSF48592">
    <property type="entry name" value="GroEL equatorial domain-like"/>
    <property type="match status" value="2"/>
</dbReference>
<dbReference type="PROSITE" id="PS00296">
    <property type="entry name" value="CHAPERONINS_CPN60"/>
    <property type="match status" value="1"/>
</dbReference>
<proteinExistence type="inferred from homology"/>
<comment type="function">
    <text evidence="1">Together with its co-chaperonin GroES, plays an essential role in assisting protein folding. The GroEL-GroES system forms a nano-cage that allows encapsulation of the non-native substrate proteins and provides a physical environment optimized to promote and accelerate protein folding.</text>
</comment>
<comment type="catalytic activity">
    <reaction evidence="1">
        <text>ATP + H2O + a folded polypeptide = ADP + phosphate + an unfolded polypeptide.</text>
        <dbReference type="EC" id="5.6.1.7"/>
    </reaction>
</comment>
<comment type="subunit">
    <text evidence="1">Forms a cylinder of 14 subunits composed of two heptameric rings stacked back-to-back. Interacts with the co-chaperonin GroES.</text>
</comment>
<comment type="subcellular location">
    <subcellularLocation>
        <location evidence="1">Cytoplasm</location>
    </subcellularLocation>
</comment>
<comment type="similarity">
    <text evidence="1">Belongs to the chaperonin (HSP60) family.</text>
</comment>
<sequence length="546" mass="58264">MAKEIKFSDSARNLLFEGVRQLHDAVKVTMGPRGRNVLIQKSYGAPSITKDGVSVAKEIELSCPVANMGAQLVKEVASKTADAAGDGTTTATVLAYSIFKEGLRNITAGANPIEVKRGMDKAAEAIINELKKASKKVGGKEEITQVATISANSDHNIGKLIADAMEKVGKDGVITVEEAKGIEDELDVVEGMQFDRGYLSPYFVTNAEKMTAQLDNAYILLTDKKISSMKDILPLLEKTMKEGKPLLIIAEDIEGEALTTLVVNKLRGVLNIAAVKAPGFGDRRKEMLKDIAILTGGQVISEELGLSLENAEVEFLGKAGRIVIDKDNTTIVDGKGHSHDVKDRVAQIKTQIASTTSDYDKEKLQERLAKLSGGVAVIKVGAASEVEMKEKKDRVDDALSATKAAVEEGIVIGGGAALIRAAQKVHLNLHDDEKVGYEIIMRAIKAPLAQIAINAGYDGGVVVNEVEKHEGHFGFNASNGKYVDMFKEGIIDPLKVERIALQNAVSVSSLLLTTEATVHEIKEEKAAPAMPDMGGMGGMGGMGGMM</sequence>
<keyword id="KW-0067">ATP-binding</keyword>
<keyword id="KW-0143">Chaperone</keyword>
<keyword id="KW-0963">Cytoplasm</keyword>
<keyword id="KW-0413">Isomerase</keyword>
<keyword id="KW-0547">Nucleotide-binding</keyword>
<keyword id="KW-1185">Reference proteome</keyword>
<keyword id="KW-0346">Stress response</keyword>
<reference key="1">
    <citation type="journal article" date="1993" name="Mol. Microbiol.">
        <title>The Hsp60 protein of Helicobacter pylori: structure and immune response in patients with gastroduodenal diseases.</title>
        <authorList>
            <person name="Macchia G."/>
            <person name="Massone A."/>
            <person name="Burroni D."/>
            <person name="Covacci A."/>
            <person name="Censini S."/>
            <person name="Rappuoli R."/>
        </authorList>
    </citation>
    <scope>NUCLEOTIDE SEQUENCE [GENOMIC DNA]</scope>
    <source>
        <strain>DSM 4867 / CCUG 17874 / NCTC 11638</strain>
    </source>
</reference>
<reference key="2">
    <citation type="journal article" date="1994" name="Mol. Microbiol.">
        <title>Helicobacter pylori hspA-hspB heat-shock gene cluster: nucleotide sequence, expression, putative function and immunogenicity.</title>
        <authorList>
            <person name="Suerbaum S."/>
            <person name="Thiberge J.-M."/>
            <person name="Kansau I."/>
            <person name="Ferrero R.L."/>
            <person name="Labigne A."/>
        </authorList>
    </citation>
    <scope>NUCLEOTIDE SEQUENCE [GENOMIC DNA]</scope>
    <source>
        <strain>85P</strain>
    </source>
</reference>
<reference key="3">
    <citation type="journal article" date="1997" name="Nature">
        <title>The complete genome sequence of the gastric pathogen Helicobacter pylori.</title>
        <authorList>
            <person name="Tomb J.-F."/>
            <person name="White O."/>
            <person name="Kerlavage A.R."/>
            <person name="Clayton R.A."/>
            <person name="Sutton G.G."/>
            <person name="Fleischmann R.D."/>
            <person name="Ketchum K.A."/>
            <person name="Klenk H.-P."/>
            <person name="Gill S.R."/>
            <person name="Dougherty B.A."/>
            <person name="Nelson K.E."/>
            <person name="Quackenbush J."/>
            <person name="Zhou L."/>
            <person name="Kirkness E.F."/>
            <person name="Peterson S.N."/>
            <person name="Loftus B.J."/>
            <person name="Richardson D.L."/>
            <person name="Dodson R.J."/>
            <person name="Khalak H.G."/>
            <person name="Glodek A."/>
            <person name="McKenney K."/>
            <person name="FitzGerald L.M."/>
            <person name="Lee N."/>
            <person name="Adams M.D."/>
            <person name="Hickey E.K."/>
            <person name="Berg D.E."/>
            <person name="Gocayne J.D."/>
            <person name="Utterback T.R."/>
            <person name="Peterson J.D."/>
            <person name="Kelley J.M."/>
            <person name="Cotton M.D."/>
            <person name="Weidman J.F."/>
            <person name="Fujii C."/>
            <person name="Bowman C."/>
            <person name="Watthey L."/>
            <person name="Wallin E."/>
            <person name="Hayes W.S."/>
            <person name="Borodovsky M."/>
            <person name="Karp P.D."/>
            <person name="Smith H.O."/>
            <person name="Fraser C.M."/>
            <person name="Venter J.C."/>
        </authorList>
    </citation>
    <scope>NUCLEOTIDE SEQUENCE [LARGE SCALE GENOMIC DNA]</scope>
    <source>
        <strain>ATCC 700392 / 26695</strain>
    </source>
</reference>
<feature type="chain" id="PRO_0000063389" description="Chaperonin GroEL">
    <location>
        <begin position="1"/>
        <end position="546"/>
    </location>
</feature>
<feature type="binding site" evidence="1">
    <location>
        <begin position="29"/>
        <end position="32"/>
    </location>
    <ligand>
        <name>ATP</name>
        <dbReference type="ChEBI" id="CHEBI:30616"/>
    </ligand>
</feature>
<feature type="binding site" evidence="1">
    <location>
        <position position="50"/>
    </location>
    <ligand>
        <name>ATP</name>
        <dbReference type="ChEBI" id="CHEBI:30616"/>
    </ligand>
</feature>
<feature type="binding site" evidence="1">
    <location>
        <begin position="86"/>
        <end position="90"/>
    </location>
    <ligand>
        <name>ATP</name>
        <dbReference type="ChEBI" id="CHEBI:30616"/>
    </ligand>
</feature>
<feature type="binding site" evidence="1">
    <location>
        <position position="414"/>
    </location>
    <ligand>
        <name>ATP</name>
        <dbReference type="ChEBI" id="CHEBI:30616"/>
    </ligand>
</feature>
<feature type="binding site" evidence="1">
    <location>
        <position position="492"/>
    </location>
    <ligand>
        <name>ATP</name>
        <dbReference type="ChEBI" id="CHEBI:30616"/>
    </ligand>
</feature>
<feature type="sequence variant" description="In strain: 85P.">
    <original>V</original>
    <variation>D</variation>
    <location>
        <position position="76"/>
    </location>
</feature>
<feature type="sequence variant" description="In strain: 85P.">
    <original>A</original>
    <variation>P</variation>
    <location>
        <position position="123"/>
    </location>
</feature>
<feature type="sequence variant" description="In strain: 85P.">
    <original>I</original>
    <variation>V</variation>
    <location>
        <position position="293"/>
    </location>
</feature>
<feature type="sequence variant" description="In strain: 85P.">
    <original>GR</original>
    <variation>K</variation>
    <location>
        <begin position="320"/>
        <end position="321"/>
    </location>
</feature>
<feature type="sequence conflict" description="In Ref. 1; CAA52062." evidence="2" ref="1">
    <original>H</original>
    <variation>D</variation>
    <location>
        <position position="339"/>
    </location>
</feature>
<feature type="sequence conflict" description="In Ref. 1; CAA52062." evidence="2" ref="1">
    <original>A</original>
    <variation>T</variation>
    <location>
        <position position="527"/>
    </location>
</feature>